<gene>
    <name evidence="1" type="primary">folE</name>
    <name type="ordered locus">COXBURSA331_A1153</name>
</gene>
<keyword id="KW-0342">GTP-binding</keyword>
<keyword id="KW-0378">Hydrolase</keyword>
<keyword id="KW-0479">Metal-binding</keyword>
<keyword id="KW-0547">Nucleotide-binding</keyword>
<keyword id="KW-0554">One-carbon metabolism</keyword>
<keyword id="KW-0862">Zinc</keyword>
<reference key="1">
    <citation type="submission" date="2007-11" db="EMBL/GenBank/DDBJ databases">
        <title>Genome sequencing of phylogenetically and phenotypically diverse Coxiella burnetii isolates.</title>
        <authorList>
            <person name="Seshadri R."/>
            <person name="Samuel J.E."/>
        </authorList>
    </citation>
    <scope>NUCLEOTIDE SEQUENCE [LARGE SCALE GENOMIC DNA]</scope>
    <source>
        <strain>RSA 331 / Henzerling II</strain>
    </source>
</reference>
<name>GCH1_COXBR</name>
<protein>
    <recommendedName>
        <fullName evidence="1">GTP cyclohydrolase 1</fullName>
        <ecNumber evidence="1">3.5.4.16</ecNumber>
    </recommendedName>
    <alternativeName>
        <fullName evidence="1">GTP cyclohydrolase I</fullName>
        <shortName evidence="1">GTP-CH-I</shortName>
    </alternativeName>
</protein>
<accession>A9NDB3</accession>
<comment type="catalytic activity">
    <reaction evidence="1">
        <text>GTP + H2O = 7,8-dihydroneopterin 3'-triphosphate + formate + H(+)</text>
        <dbReference type="Rhea" id="RHEA:17473"/>
        <dbReference type="ChEBI" id="CHEBI:15377"/>
        <dbReference type="ChEBI" id="CHEBI:15378"/>
        <dbReference type="ChEBI" id="CHEBI:15740"/>
        <dbReference type="ChEBI" id="CHEBI:37565"/>
        <dbReference type="ChEBI" id="CHEBI:58462"/>
        <dbReference type="EC" id="3.5.4.16"/>
    </reaction>
</comment>
<comment type="pathway">
    <text evidence="1">Cofactor biosynthesis; 7,8-dihydroneopterin triphosphate biosynthesis; 7,8-dihydroneopterin triphosphate from GTP: step 1/1.</text>
</comment>
<comment type="subunit">
    <text evidence="1">Homomer.</text>
</comment>
<comment type="similarity">
    <text evidence="1">Belongs to the GTP cyclohydrolase I family.</text>
</comment>
<feature type="chain" id="PRO_1000078139" description="GTP cyclohydrolase 1">
    <location>
        <begin position="1"/>
        <end position="184"/>
    </location>
</feature>
<feature type="binding site" evidence="1">
    <location>
        <position position="75"/>
    </location>
    <ligand>
        <name>Zn(2+)</name>
        <dbReference type="ChEBI" id="CHEBI:29105"/>
    </ligand>
</feature>
<feature type="binding site" evidence="1">
    <location>
        <position position="78"/>
    </location>
    <ligand>
        <name>Zn(2+)</name>
        <dbReference type="ChEBI" id="CHEBI:29105"/>
    </ligand>
</feature>
<feature type="binding site" evidence="1">
    <location>
        <position position="146"/>
    </location>
    <ligand>
        <name>Zn(2+)</name>
        <dbReference type="ChEBI" id="CHEBI:29105"/>
    </ligand>
</feature>
<evidence type="ECO:0000255" key="1">
    <source>
        <dbReference type="HAMAP-Rule" id="MF_00223"/>
    </source>
</evidence>
<dbReference type="EC" id="3.5.4.16" evidence="1"/>
<dbReference type="EMBL" id="CP000890">
    <property type="protein sequence ID" value="ABX77366.1"/>
    <property type="molecule type" value="Genomic_DNA"/>
</dbReference>
<dbReference type="SMR" id="A9NDB3"/>
<dbReference type="KEGG" id="cbs:COXBURSA331_A1153"/>
<dbReference type="HOGENOM" id="CLU_049768_3_1_6"/>
<dbReference type="UniPathway" id="UPA00848">
    <property type="reaction ID" value="UER00151"/>
</dbReference>
<dbReference type="GO" id="GO:0005737">
    <property type="term" value="C:cytoplasm"/>
    <property type="evidence" value="ECO:0007669"/>
    <property type="project" value="TreeGrafter"/>
</dbReference>
<dbReference type="GO" id="GO:0005525">
    <property type="term" value="F:GTP binding"/>
    <property type="evidence" value="ECO:0007669"/>
    <property type="project" value="UniProtKB-KW"/>
</dbReference>
<dbReference type="GO" id="GO:0003934">
    <property type="term" value="F:GTP cyclohydrolase I activity"/>
    <property type="evidence" value="ECO:0007669"/>
    <property type="project" value="UniProtKB-UniRule"/>
</dbReference>
<dbReference type="GO" id="GO:0008270">
    <property type="term" value="F:zinc ion binding"/>
    <property type="evidence" value="ECO:0007669"/>
    <property type="project" value="UniProtKB-UniRule"/>
</dbReference>
<dbReference type="GO" id="GO:0006730">
    <property type="term" value="P:one-carbon metabolic process"/>
    <property type="evidence" value="ECO:0007669"/>
    <property type="project" value="UniProtKB-UniRule"/>
</dbReference>
<dbReference type="GO" id="GO:0006729">
    <property type="term" value="P:tetrahydrobiopterin biosynthetic process"/>
    <property type="evidence" value="ECO:0007669"/>
    <property type="project" value="TreeGrafter"/>
</dbReference>
<dbReference type="GO" id="GO:0046654">
    <property type="term" value="P:tetrahydrofolate biosynthetic process"/>
    <property type="evidence" value="ECO:0007669"/>
    <property type="project" value="UniProtKB-UniRule"/>
</dbReference>
<dbReference type="FunFam" id="3.30.1130.10:FF:000001">
    <property type="entry name" value="GTP cyclohydrolase 1"/>
    <property type="match status" value="1"/>
</dbReference>
<dbReference type="Gene3D" id="1.10.286.10">
    <property type="match status" value="1"/>
</dbReference>
<dbReference type="Gene3D" id="3.30.1130.10">
    <property type="match status" value="1"/>
</dbReference>
<dbReference type="HAMAP" id="MF_00223">
    <property type="entry name" value="FolE"/>
    <property type="match status" value="1"/>
</dbReference>
<dbReference type="InterPro" id="IPR043133">
    <property type="entry name" value="GTP-CH-I_C/QueF"/>
</dbReference>
<dbReference type="InterPro" id="IPR043134">
    <property type="entry name" value="GTP-CH-I_N"/>
</dbReference>
<dbReference type="InterPro" id="IPR001474">
    <property type="entry name" value="GTP_CycHdrlase_I"/>
</dbReference>
<dbReference type="InterPro" id="IPR018234">
    <property type="entry name" value="GTP_CycHdrlase_I_CS"/>
</dbReference>
<dbReference type="InterPro" id="IPR020602">
    <property type="entry name" value="GTP_CycHdrlase_I_dom"/>
</dbReference>
<dbReference type="NCBIfam" id="TIGR00063">
    <property type="entry name" value="folE"/>
    <property type="match status" value="1"/>
</dbReference>
<dbReference type="NCBIfam" id="NF006825">
    <property type="entry name" value="PRK09347.1-2"/>
    <property type="match status" value="1"/>
</dbReference>
<dbReference type="NCBIfam" id="NF006826">
    <property type="entry name" value="PRK09347.1-3"/>
    <property type="match status" value="1"/>
</dbReference>
<dbReference type="PANTHER" id="PTHR11109:SF7">
    <property type="entry name" value="GTP CYCLOHYDROLASE 1"/>
    <property type="match status" value="1"/>
</dbReference>
<dbReference type="PANTHER" id="PTHR11109">
    <property type="entry name" value="GTP CYCLOHYDROLASE I"/>
    <property type="match status" value="1"/>
</dbReference>
<dbReference type="Pfam" id="PF01227">
    <property type="entry name" value="GTP_cyclohydroI"/>
    <property type="match status" value="1"/>
</dbReference>
<dbReference type="SUPFAM" id="SSF55620">
    <property type="entry name" value="Tetrahydrobiopterin biosynthesis enzymes-like"/>
    <property type="match status" value="1"/>
</dbReference>
<dbReference type="PROSITE" id="PS00859">
    <property type="entry name" value="GTP_CYCLOHYDROL_1_1"/>
    <property type="match status" value="1"/>
</dbReference>
<dbReference type="PROSITE" id="PS00860">
    <property type="entry name" value="GTP_CYCLOHYDROL_1_2"/>
    <property type="match status" value="1"/>
</dbReference>
<organism>
    <name type="scientific">Coxiella burnetii (strain RSA 331 / Henzerling II)</name>
    <dbReference type="NCBI Taxonomy" id="360115"/>
    <lineage>
        <taxon>Bacteria</taxon>
        <taxon>Pseudomonadati</taxon>
        <taxon>Pseudomonadota</taxon>
        <taxon>Gammaproteobacteria</taxon>
        <taxon>Legionellales</taxon>
        <taxon>Coxiellaceae</taxon>
        <taxon>Coxiella</taxon>
    </lineage>
</organism>
<sequence>MSNTIADHVKAILIALGEDPNREGLRDTPKRYEKALEHLTKGYHEKLPSVVKKAVFQSGMDEMVILKDIELYSLCEHHLLPFIGRCHVAYLPSGKIIGISKLARIVDMFAKRLQVQENLTKQIAEAILTATEAKGVGVIIEAKHLCMMMRGVEKQNSEMTTSVMLGTFRKDDRTRSEFLSLIRK</sequence>
<proteinExistence type="inferred from homology"/>